<organism>
    <name type="scientific">Mycolicibacterium gilvum (strain PYR-GCK)</name>
    <name type="common">Mycobacterium gilvum (strain PYR-GCK)</name>
    <dbReference type="NCBI Taxonomy" id="350054"/>
    <lineage>
        <taxon>Bacteria</taxon>
        <taxon>Bacillati</taxon>
        <taxon>Actinomycetota</taxon>
        <taxon>Actinomycetes</taxon>
        <taxon>Mycobacteriales</taxon>
        <taxon>Mycobacteriaceae</taxon>
        <taxon>Mycolicibacterium</taxon>
    </lineage>
</organism>
<name>RS7_MYCGI</name>
<evidence type="ECO:0000255" key="1">
    <source>
        <dbReference type="HAMAP-Rule" id="MF_00480"/>
    </source>
</evidence>
<evidence type="ECO:0000305" key="2"/>
<comment type="function">
    <text evidence="1">One of the primary rRNA binding proteins, it binds directly to 16S rRNA where it nucleates assembly of the head domain of the 30S subunit. Is located at the subunit interface close to the decoding center, probably blocks exit of the E-site tRNA.</text>
</comment>
<comment type="subunit">
    <text evidence="1">Part of the 30S ribosomal subunit. Contacts proteins S9 and S11.</text>
</comment>
<comment type="similarity">
    <text evidence="1">Belongs to the universal ribosomal protein uS7 family.</text>
</comment>
<feature type="chain" id="PRO_1000081289" description="Small ribosomal subunit protein uS7">
    <location>
        <begin position="1"/>
        <end position="156"/>
    </location>
</feature>
<reference key="1">
    <citation type="submission" date="2007-04" db="EMBL/GenBank/DDBJ databases">
        <title>Complete sequence of chromosome of Mycobacterium gilvum PYR-GCK.</title>
        <authorList>
            <consortium name="US DOE Joint Genome Institute"/>
            <person name="Copeland A."/>
            <person name="Lucas S."/>
            <person name="Lapidus A."/>
            <person name="Barry K."/>
            <person name="Detter J.C."/>
            <person name="Glavina del Rio T."/>
            <person name="Hammon N."/>
            <person name="Israni S."/>
            <person name="Dalin E."/>
            <person name="Tice H."/>
            <person name="Pitluck S."/>
            <person name="Chain P."/>
            <person name="Malfatti S."/>
            <person name="Shin M."/>
            <person name="Vergez L."/>
            <person name="Schmutz J."/>
            <person name="Larimer F."/>
            <person name="Land M."/>
            <person name="Hauser L."/>
            <person name="Kyrpides N."/>
            <person name="Mikhailova N."/>
            <person name="Miller C."/>
            <person name="Richardson P."/>
        </authorList>
    </citation>
    <scope>NUCLEOTIDE SEQUENCE [LARGE SCALE GENOMIC DNA]</scope>
    <source>
        <strain>PYR-GCK</strain>
    </source>
</reference>
<keyword id="KW-0687">Ribonucleoprotein</keyword>
<keyword id="KW-0689">Ribosomal protein</keyword>
<keyword id="KW-0694">RNA-binding</keyword>
<keyword id="KW-0699">rRNA-binding</keyword>
<keyword id="KW-0820">tRNA-binding</keyword>
<protein>
    <recommendedName>
        <fullName evidence="1">Small ribosomal subunit protein uS7</fullName>
    </recommendedName>
    <alternativeName>
        <fullName evidence="2">30S ribosomal protein S7</fullName>
    </alternativeName>
</protein>
<gene>
    <name evidence="1" type="primary">rpsG</name>
    <name type="ordered locus">Mflv_5077</name>
</gene>
<proteinExistence type="inferred from homology"/>
<dbReference type="EMBL" id="CP000656">
    <property type="protein sequence ID" value="ABP47543.1"/>
    <property type="molecule type" value="Genomic_DNA"/>
</dbReference>
<dbReference type="SMR" id="A4T1R4"/>
<dbReference type="STRING" id="350054.Mflv_5077"/>
<dbReference type="KEGG" id="mgi:Mflv_5077"/>
<dbReference type="eggNOG" id="COG0049">
    <property type="taxonomic scope" value="Bacteria"/>
</dbReference>
<dbReference type="HOGENOM" id="CLU_072226_1_1_11"/>
<dbReference type="OrthoDB" id="9807653at2"/>
<dbReference type="GO" id="GO:0015935">
    <property type="term" value="C:small ribosomal subunit"/>
    <property type="evidence" value="ECO:0007669"/>
    <property type="project" value="InterPro"/>
</dbReference>
<dbReference type="GO" id="GO:0019843">
    <property type="term" value="F:rRNA binding"/>
    <property type="evidence" value="ECO:0007669"/>
    <property type="project" value="UniProtKB-UniRule"/>
</dbReference>
<dbReference type="GO" id="GO:0003735">
    <property type="term" value="F:structural constituent of ribosome"/>
    <property type="evidence" value="ECO:0007669"/>
    <property type="project" value="InterPro"/>
</dbReference>
<dbReference type="GO" id="GO:0000049">
    <property type="term" value="F:tRNA binding"/>
    <property type="evidence" value="ECO:0007669"/>
    <property type="project" value="UniProtKB-UniRule"/>
</dbReference>
<dbReference type="GO" id="GO:0006412">
    <property type="term" value="P:translation"/>
    <property type="evidence" value="ECO:0007669"/>
    <property type="project" value="UniProtKB-UniRule"/>
</dbReference>
<dbReference type="CDD" id="cd14869">
    <property type="entry name" value="uS7_Bacteria"/>
    <property type="match status" value="1"/>
</dbReference>
<dbReference type="FunFam" id="1.10.455.10:FF:000001">
    <property type="entry name" value="30S ribosomal protein S7"/>
    <property type="match status" value="1"/>
</dbReference>
<dbReference type="Gene3D" id="1.10.455.10">
    <property type="entry name" value="Ribosomal protein S7 domain"/>
    <property type="match status" value="1"/>
</dbReference>
<dbReference type="HAMAP" id="MF_00480_B">
    <property type="entry name" value="Ribosomal_uS7_B"/>
    <property type="match status" value="1"/>
</dbReference>
<dbReference type="InterPro" id="IPR000235">
    <property type="entry name" value="Ribosomal_uS7"/>
</dbReference>
<dbReference type="InterPro" id="IPR005717">
    <property type="entry name" value="Ribosomal_uS7_bac/org-type"/>
</dbReference>
<dbReference type="InterPro" id="IPR020606">
    <property type="entry name" value="Ribosomal_uS7_CS"/>
</dbReference>
<dbReference type="InterPro" id="IPR023798">
    <property type="entry name" value="Ribosomal_uS7_dom"/>
</dbReference>
<dbReference type="InterPro" id="IPR036823">
    <property type="entry name" value="Ribosomal_uS7_dom_sf"/>
</dbReference>
<dbReference type="NCBIfam" id="TIGR01029">
    <property type="entry name" value="rpsG_bact"/>
    <property type="match status" value="1"/>
</dbReference>
<dbReference type="PANTHER" id="PTHR11205">
    <property type="entry name" value="RIBOSOMAL PROTEIN S7"/>
    <property type="match status" value="1"/>
</dbReference>
<dbReference type="Pfam" id="PF00177">
    <property type="entry name" value="Ribosomal_S7"/>
    <property type="match status" value="1"/>
</dbReference>
<dbReference type="PIRSF" id="PIRSF002122">
    <property type="entry name" value="RPS7p_RPS7a_RPS5e_RPS7o"/>
    <property type="match status" value="1"/>
</dbReference>
<dbReference type="SUPFAM" id="SSF47973">
    <property type="entry name" value="Ribosomal protein S7"/>
    <property type="match status" value="1"/>
</dbReference>
<dbReference type="PROSITE" id="PS00052">
    <property type="entry name" value="RIBOSOMAL_S7"/>
    <property type="match status" value="1"/>
</dbReference>
<accession>A4T1R4</accession>
<sequence>MPRKGPAPKRPLVNDPVYGSQLVTQLVNKVLLDGKKSLAERIVYGALEQAREKTGTDPVVTLKRAMDNVKPSLEVRSRRVGGATYQVPVEVRPDRSVTLALRWLVSFSKARREKTMIERLANEILDASNGLGAAVKRREDTHKMAEANRAFAHYRW</sequence>